<proteinExistence type="inferred from homology"/>
<protein>
    <recommendedName>
        <fullName>Spindle pole body component SPC42</fullName>
    </recommendedName>
</protein>
<sequence length="363" mass="42199">MNGSPTPKRYSSKSSRLYDDYYNIPYQYSNPTPMNRDYNDVGSRINADKLVPEEYKRNTEFINKAVQQNKELNFKLREKQNEIFELKKIAETLRSKLEKYVDITKKLENQNLNLQIKISDLEKKLSDANSTFKEMRFPKVKDPMVDDDPVSENYDQINVPKHRAPDATGNPRTTNKVSNTSDQDSRLKAIERTLSVLTNYVMRSEDGNNDRMSPLPSPLNTISPINNRLNFQEPKRYNPTVKVNPSDDDIMMYESAELKRVEEEIEELKRKILVRKKHDLRKLSLNNQLQELQSMMDGDDNIKLDNVSKHNHATHRHSSQSSRDYSPSSDACLECSNDLYEKNRVKPENNMSETFATPTPNNX</sequence>
<dbReference type="EMBL" id="AEHH01000047">
    <property type="protein sequence ID" value="EGA57877.1"/>
    <property type="molecule type" value="Genomic_DNA"/>
</dbReference>
<dbReference type="SMR" id="E7Q664"/>
<dbReference type="HOGENOM" id="CLU_056211_1_0_1"/>
<dbReference type="OrthoDB" id="4061426at2759"/>
<dbReference type="GO" id="GO:0005737">
    <property type="term" value="C:cytoplasm"/>
    <property type="evidence" value="ECO:0007669"/>
    <property type="project" value="UniProtKB-KW"/>
</dbReference>
<dbReference type="GO" id="GO:0005634">
    <property type="term" value="C:nucleus"/>
    <property type="evidence" value="ECO:0007669"/>
    <property type="project" value="UniProtKB-SubCell"/>
</dbReference>
<dbReference type="GO" id="GO:0005816">
    <property type="term" value="C:spindle pole body"/>
    <property type="evidence" value="ECO:0007669"/>
    <property type="project" value="UniProtKB-SubCell"/>
</dbReference>
<dbReference type="Gene3D" id="1.20.5.1180">
    <property type="entry name" value="Geminin coiled-coil domain"/>
    <property type="match status" value="1"/>
</dbReference>
<dbReference type="InterPro" id="IPR021611">
    <property type="entry name" value="Spc42"/>
</dbReference>
<dbReference type="Pfam" id="PF11544">
    <property type="entry name" value="Spc42p"/>
    <property type="match status" value="1"/>
</dbReference>
<reference key="1">
    <citation type="journal article" date="2011" name="PLoS Genet.">
        <title>Whole-genome comparison reveals novel genetic elements that characterize the genome of industrial strains of Saccharomyces cerevisiae.</title>
        <authorList>
            <person name="Borneman A.R."/>
            <person name="Desany B.A."/>
            <person name="Riches D."/>
            <person name="Affourtit J.P."/>
            <person name="Forgan A.H."/>
            <person name="Pretorius I.S."/>
            <person name="Egholm M."/>
            <person name="Chambers P.J."/>
        </authorList>
    </citation>
    <scope>NUCLEOTIDE SEQUENCE [LARGE SCALE GENOMIC DNA]</scope>
    <source>
        <strain>FostersB</strain>
    </source>
</reference>
<accession>E7Q664</accession>
<organism>
    <name type="scientific">Saccharomyces cerevisiae (strain FostersB)</name>
    <name type="common">Baker's yeast</name>
    <dbReference type="NCBI Taxonomy" id="764102"/>
    <lineage>
        <taxon>Eukaryota</taxon>
        <taxon>Fungi</taxon>
        <taxon>Dikarya</taxon>
        <taxon>Ascomycota</taxon>
        <taxon>Saccharomycotina</taxon>
        <taxon>Saccharomycetes</taxon>
        <taxon>Saccharomycetales</taxon>
        <taxon>Saccharomycetaceae</taxon>
        <taxon>Saccharomyces</taxon>
    </lineage>
</organism>
<keyword id="KW-0175">Coiled coil</keyword>
<keyword id="KW-0963">Cytoplasm</keyword>
<keyword id="KW-0206">Cytoskeleton</keyword>
<keyword id="KW-0539">Nucleus</keyword>
<keyword id="KW-0597">Phosphoprotein</keyword>
<name>SPC42_YEASB</name>
<comment type="function">
    <text evidence="1">Forms a polymeric layer at the periphery of the spindle pole body (SPB) central plaque which has an essential function during SPB duplication and may facilitate attachment of the SPB to the nuclear membrane.</text>
</comment>
<comment type="subunit">
    <text evidence="1">Component of the SPC110 complex containing at least CMD1, SPC29, SPC42 and SCP110.</text>
</comment>
<comment type="subcellular location">
    <subcellularLocation>
        <location evidence="1">Nucleus</location>
    </subcellularLocation>
    <subcellularLocation>
        <location evidence="1">Cytoplasm</location>
        <location evidence="1">Cytoskeleton</location>
        <location evidence="1">Microtubule organizing center</location>
        <location evidence="1">Spindle pole body</location>
    </subcellularLocation>
</comment>
<comment type="similarity">
    <text evidence="5">Belongs to the SPC42 family.</text>
</comment>
<feature type="chain" id="PRO_0000409217" description="Spindle pole body component SPC42">
    <location>
        <begin position="1"/>
        <end position="363"/>
    </location>
</feature>
<feature type="region of interest" description="Disordered" evidence="4">
    <location>
        <begin position="160"/>
        <end position="184"/>
    </location>
</feature>
<feature type="region of interest" description="Disordered" evidence="4">
    <location>
        <begin position="310"/>
        <end position="331"/>
    </location>
</feature>
<feature type="region of interest" description="Disordered" evidence="4">
    <location>
        <begin position="343"/>
        <end position="363"/>
    </location>
</feature>
<feature type="coiled-coil region" evidence="3">
    <location>
        <begin position="62"/>
        <end position="136"/>
    </location>
</feature>
<feature type="coiled-coil region" evidence="3">
    <location>
        <begin position="248"/>
        <end position="297"/>
    </location>
</feature>
<feature type="compositionally biased region" description="Polar residues" evidence="4">
    <location>
        <begin position="170"/>
        <end position="182"/>
    </location>
</feature>
<feature type="compositionally biased region" description="Low complexity" evidence="4">
    <location>
        <begin position="319"/>
        <end position="329"/>
    </location>
</feature>
<feature type="compositionally biased region" description="Polar residues" evidence="4">
    <location>
        <begin position="349"/>
        <end position="363"/>
    </location>
</feature>
<feature type="modified residue" description="Phosphoserine" evidence="2">
    <location>
        <position position="213"/>
    </location>
</feature>
<feature type="modified residue" description="Phosphoserine" evidence="2">
    <location>
        <position position="217"/>
    </location>
</feature>
<feature type="modified residue" description="Phosphoserine" evidence="2">
    <location>
        <position position="284"/>
    </location>
</feature>
<feature type="modified residue" description="Phosphoserine" evidence="2">
    <location>
        <position position="329"/>
    </location>
</feature>
<evidence type="ECO:0000250" key="1"/>
<evidence type="ECO:0000250" key="2">
    <source>
        <dbReference type="UniProtKB" id="P36094"/>
    </source>
</evidence>
<evidence type="ECO:0000255" key="3"/>
<evidence type="ECO:0000256" key="4">
    <source>
        <dbReference type="SAM" id="MobiDB-lite"/>
    </source>
</evidence>
<evidence type="ECO:0000305" key="5"/>
<gene>
    <name type="primary">SPC42</name>
    <name type="ORF">FOSTERSB_2873</name>
</gene>